<proteinExistence type="evidence at protein level"/>
<keyword id="KW-0012">Acyltransferase</keyword>
<keyword id="KW-0028">Amino-acid biosynthesis</keyword>
<keyword id="KW-0963">Cytoplasm</keyword>
<keyword id="KW-0486">Methionine biosynthesis</keyword>
<keyword id="KW-1185">Reference proteome</keyword>
<keyword id="KW-0808">Transferase</keyword>
<organism>
    <name type="scientific">Schizosaccharomyces pombe (strain 972 / ATCC 24843)</name>
    <name type="common">Fission yeast</name>
    <dbReference type="NCBI Taxonomy" id="284812"/>
    <lineage>
        <taxon>Eukaryota</taxon>
        <taxon>Fungi</taxon>
        <taxon>Dikarya</taxon>
        <taxon>Ascomycota</taxon>
        <taxon>Taphrinomycotina</taxon>
        <taxon>Schizosaccharomycetes</taxon>
        <taxon>Schizosaccharomycetales</taxon>
        <taxon>Schizosaccharomycetaceae</taxon>
        <taxon>Schizosaccharomyces</taxon>
    </lineage>
</organism>
<gene>
    <name type="primary">met6</name>
    <name type="ORF">SPBC56F2.11</name>
</gene>
<accession>O60062</accession>
<protein>
    <recommendedName>
        <fullName>Homoserine O-acetyltransferase</fullName>
        <ecNumber evidence="3">2.3.1.31</ecNumber>
    </recommendedName>
    <alternativeName>
        <fullName>Homoserine O-trans-acetylase</fullName>
    </alternativeName>
</protein>
<name>MET2_SCHPO</name>
<evidence type="ECO:0000255" key="1"/>
<evidence type="ECO:0000256" key="2">
    <source>
        <dbReference type="SAM" id="MobiDB-lite"/>
    </source>
</evidence>
<evidence type="ECO:0000269" key="3">
    <source>
    </source>
</evidence>
<evidence type="ECO:0000269" key="4">
    <source>
    </source>
</evidence>
<evidence type="ECO:0000305" key="5"/>
<evidence type="ECO:0000305" key="6">
    <source>
    </source>
</evidence>
<comment type="function">
    <text evidence="3">Commits homoserine to the methionine biosynthesis pathway by catalyzing its O-acetylation.</text>
</comment>
<comment type="catalytic activity">
    <reaction evidence="3">
        <text>L-homoserine + acetyl-CoA = O-acetyl-L-homoserine + CoA</text>
        <dbReference type="Rhea" id="RHEA:13701"/>
        <dbReference type="ChEBI" id="CHEBI:57287"/>
        <dbReference type="ChEBI" id="CHEBI:57288"/>
        <dbReference type="ChEBI" id="CHEBI:57476"/>
        <dbReference type="ChEBI" id="CHEBI:57716"/>
        <dbReference type="EC" id="2.3.1.31"/>
    </reaction>
    <physiologicalReaction direction="left-to-right" evidence="3">
        <dbReference type="Rhea" id="RHEA:13702"/>
    </physiologicalReaction>
</comment>
<comment type="biophysicochemical properties">
    <kinetics>
        <KM evidence="3">20.9 uM for acetyl-CoA (at pH 8)</KM>
        <KM evidence="3">1090 uM for L-homoserine (at pH 8)</KM>
        <KM evidence="3">48.4 uM for propionyl-CoA (at pH 8)</KM>
        <KM evidence="3">44.1 uM for buturyl-CoA (at pH 8)</KM>
        <text evidence="3">kcat is 9.34 sec(-1) with acetyl-CoA as substrate (at pH 8) (PubMed:16216079). kcat is 9.60 sec(-1) with L-homoserine as substrate (at pH 8) (PubMed:16216079). kcat is 16.1 sec(-1) with propionyl-CoA as substrate (at pH 8) (PubMed:16216079). kcat is 47.2 sec(-1) with buturyl-CoA as substrate (at pH 8) (PubMed:16216079).</text>
    </kinetics>
</comment>
<comment type="pathway">
    <text evidence="3">Amino-acid biosynthesis; L-methionine biosynthesis via de novo pathway; O-acetyl-L-homoserine from L-homoserine: step 1/1.</text>
</comment>
<comment type="subcellular location">
    <subcellularLocation>
        <location evidence="4">Cytoplasm</location>
    </subcellularLocation>
</comment>
<comment type="similarity">
    <text evidence="5">Belongs to the AB hydrolase superfamily. MetX family.</text>
</comment>
<comment type="sequence caution" evidence="5">
    <conflict type="erroneous gene model prediction">
        <sequence resource="EMBL-CDS" id="CAA18890"/>
    </conflict>
</comment>
<reference key="1">
    <citation type="journal article" date="1998" name="J. Bacteriol.">
        <title>Methionine induces sexual development in the fission yeast Schizosaccharomyces pombe via an ste11-dependent signalling pathway.</title>
        <authorList>
            <person name="Schweingruber A.-M."/>
            <person name="Hilti N."/>
            <person name="Edenharter E."/>
            <person name="Schweingruber M."/>
        </authorList>
    </citation>
    <scope>NUCLEOTIDE SEQUENCE [GENOMIC DNA]</scope>
</reference>
<reference key="2">
    <citation type="journal article" date="2002" name="Nature">
        <title>The genome sequence of Schizosaccharomyces pombe.</title>
        <authorList>
            <person name="Wood V."/>
            <person name="Gwilliam R."/>
            <person name="Rajandream M.A."/>
            <person name="Lyne M.H."/>
            <person name="Lyne R."/>
            <person name="Stewart A."/>
            <person name="Sgouros J.G."/>
            <person name="Peat N."/>
            <person name="Hayles J."/>
            <person name="Baker S.G."/>
            <person name="Basham D."/>
            <person name="Bowman S."/>
            <person name="Brooks K."/>
            <person name="Brown D."/>
            <person name="Brown S."/>
            <person name="Chillingworth T."/>
            <person name="Churcher C.M."/>
            <person name="Collins M."/>
            <person name="Connor R."/>
            <person name="Cronin A."/>
            <person name="Davis P."/>
            <person name="Feltwell T."/>
            <person name="Fraser A."/>
            <person name="Gentles S."/>
            <person name="Goble A."/>
            <person name="Hamlin N."/>
            <person name="Harris D.E."/>
            <person name="Hidalgo J."/>
            <person name="Hodgson G."/>
            <person name="Holroyd S."/>
            <person name="Hornsby T."/>
            <person name="Howarth S."/>
            <person name="Huckle E.J."/>
            <person name="Hunt S."/>
            <person name="Jagels K."/>
            <person name="James K.D."/>
            <person name="Jones L."/>
            <person name="Jones M."/>
            <person name="Leather S."/>
            <person name="McDonald S."/>
            <person name="McLean J."/>
            <person name="Mooney P."/>
            <person name="Moule S."/>
            <person name="Mungall K.L."/>
            <person name="Murphy L.D."/>
            <person name="Niblett D."/>
            <person name="Odell C."/>
            <person name="Oliver K."/>
            <person name="O'Neil S."/>
            <person name="Pearson D."/>
            <person name="Quail M.A."/>
            <person name="Rabbinowitsch E."/>
            <person name="Rutherford K.M."/>
            <person name="Rutter S."/>
            <person name="Saunders D."/>
            <person name="Seeger K."/>
            <person name="Sharp S."/>
            <person name="Skelton J."/>
            <person name="Simmonds M.N."/>
            <person name="Squares R."/>
            <person name="Squares S."/>
            <person name="Stevens K."/>
            <person name="Taylor K."/>
            <person name="Taylor R.G."/>
            <person name="Tivey A."/>
            <person name="Walsh S.V."/>
            <person name="Warren T."/>
            <person name="Whitehead S."/>
            <person name="Woodward J.R."/>
            <person name="Volckaert G."/>
            <person name="Aert R."/>
            <person name="Robben J."/>
            <person name="Grymonprez B."/>
            <person name="Weltjens I."/>
            <person name="Vanstreels E."/>
            <person name="Rieger M."/>
            <person name="Schaefer M."/>
            <person name="Mueller-Auer S."/>
            <person name="Gabel C."/>
            <person name="Fuchs M."/>
            <person name="Duesterhoeft A."/>
            <person name="Fritzc C."/>
            <person name="Holzer E."/>
            <person name="Moestl D."/>
            <person name="Hilbert H."/>
            <person name="Borzym K."/>
            <person name="Langer I."/>
            <person name="Beck A."/>
            <person name="Lehrach H."/>
            <person name="Reinhardt R."/>
            <person name="Pohl T.M."/>
            <person name="Eger P."/>
            <person name="Zimmermann W."/>
            <person name="Wedler H."/>
            <person name="Wambutt R."/>
            <person name="Purnelle B."/>
            <person name="Goffeau A."/>
            <person name="Cadieu E."/>
            <person name="Dreano S."/>
            <person name="Gloux S."/>
            <person name="Lelaure V."/>
            <person name="Mottier S."/>
            <person name="Galibert F."/>
            <person name="Aves S.J."/>
            <person name="Xiang Z."/>
            <person name="Hunt C."/>
            <person name="Moore K."/>
            <person name="Hurst S.M."/>
            <person name="Lucas M."/>
            <person name="Rochet M."/>
            <person name="Gaillardin C."/>
            <person name="Tallada V.A."/>
            <person name="Garzon A."/>
            <person name="Thode G."/>
            <person name="Daga R.R."/>
            <person name="Cruzado L."/>
            <person name="Jimenez J."/>
            <person name="Sanchez M."/>
            <person name="del Rey F."/>
            <person name="Benito J."/>
            <person name="Dominguez A."/>
            <person name="Revuelta J.L."/>
            <person name="Moreno S."/>
            <person name="Armstrong J."/>
            <person name="Forsburg S.L."/>
            <person name="Cerutti L."/>
            <person name="Lowe T."/>
            <person name="McCombie W.R."/>
            <person name="Paulsen I."/>
            <person name="Potashkin J."/>
            <person name="Shpakovski G.V."/>
            <person name="Ussery D."/>
            <person name="Barrell B.G."/>
            <person name="Nurse P."/>
        </authorList>
    </citation>
    <scope>NUCLEOTIDE SEQUENCE [LARGE SCALE GENOMIC DNA]</scope>
    <source>
        <strain>972 / ATCC 24843</strain>
    </source>
</reference>
<reference key="3">
    <citation type="journal article" date="2011" name="Science">
        <title>Comparative functional genomics of the fission yeasts.</title>
        <authorList>
            <person name="Rhind N."/>
            <person name="Chen Z."/>
            <person name="Yassour M."/>
            <person name="Thompson D.A."/>
            <person name="Haas B.J."/>
            <person name="Habib N."/>
            <person name="Wapinski I."/>
            <person name="Roy S."/>
            <person name="Lin M.F."/>
            <person name="Heiman D.I."/>
            <person name="Young S.K."/>
            <person name="Furuya K."/>
            <person name="Guo Y."/>
            <person name="Pidoux A."/>
            <person name="Chen H.M."/>
            <person name="Robbertse B."/>
            <person name="Goldberg J.M."/>
            <person name="Aoki K."/>
            <person name="Bayne E.H."/>
            <person name="Berlin A.M."/>
            <person name="Desjardins C.A."/>
            <person name="Dobbs E."/>
            <person name="Dukaj L."/>
            <person name="Fan L."/>
            <person name="FitzGerald M.G."/>
            <person name="French C."/>
            <person name="Gujja S."/>
            <person name="Hansen K."/>
            <person name="Keifenheim D."/>
            <person name="Levin J.Z."/>
            <person name="Mosher R.A."/>
            <person name="Mueller C.A."/>
            <person name="Pfiffner J."/>
            <person name="Priest M."/>
            <person name="Russ C."/>
            <person name="Smialowska A."/>
            <person name="Swoboda P."/>
            <person name="Sykes S.M."/>
            <person name="Vaughn M."/>
            <person name="Vengrova S."/>
            <person name="Yoder R."/>
            <person name="Zeng Q."/>
            <person name="Allshire R."/>
            <person name="Baulcombe D."/>
            <person name="Birren B.W."/>
            <person name="Brown W."/>
            <person name="Ekwall K."/>
            <person name="Kellis M."/>
            <person name="Leatherwood J."/>
            <person name="Levin H."/>
            <person name="Margalit H."/>
            <person name="Martienssen R."/>
            <person name="Nieduszynski C.A."/>
            <person name="Spatafora J.W."/>
            <person name="Friedman N."/>
            <person name="Dalgaard J.Z."/>
            <person name="Baumann P."/>
            <person name="Niki H."/>
            <person name="Regev A."/>
            <person name="Nusbaum C."/>
        </authorList>
    </citation>
    <scope>REVISION OF GENE MODEL</scope>
</reference>
<reference key="4">
    <citation type="journal article" date="2005" name="Biochemistry">
        <title>Catalytic mechanism of fungal homoserine transacetylase.</title>
        <authorList>
            <person name="Nazi I."/>
            <person name="Wright G.D."/>
        </authorList>
    </citation>
    <scope>FUNCTION</scope>
    <scope>CATALYTIC ACTIVITY</scope>
    <scope>BIOPHYSICOCHEMICAL PROPERTIES</scope>
    <scope>PATHWAY</scope>
    <scope>ACTIVE SITE</scope>
    <scope>MUTAGENESIS OF SER-163; ASP-403 AND HIS-432</scope>
</reference>
<reference key="5">
    <citation type="journal article" date="2006" name="Nat. Biotechnol.">
        <title>ORFeome cloning and global analysis of protein localization in the fission yeast Schizosaccharomyces pombe.</title>
        <authorList>
            <person name="Matsuyama A."/>
            <person name="Arai R."/>
            <person name="Yashiroda Y."/>
            <person name="Shirai A."/>
            <person name="Kamata A."/>
            <person name="Sekido S."/>
            <person name="Kobayashi Y."/>
            <person name="Hashimoto A."/>
            <person name="Hamamoto M."/>
            <person name="Hiraoka Y."/>
            <person name="Horinouchi S."/>
            <person name="Yoshida M."/>
        </authorList>
    </citation>
    <scope>SUBCELLULAR LOCATION [LARGE SCALE ANALYSIS]</scope>
</reference>
<sequence length="489" mass="54311">MESQSPIESIVFTDSCHPSQQENKFVQLISDQKIAIVPKFTLECGDILYDVPVAFKTWGTLNKEGNNCLLLCHALSGSADAGDWWGPLLGPGRAFDPSHFFIVCLNSLGSPYGSASPVTWNAETHSVYGPEFPLATIRDDVNIHKLILQRLGVKQIAMAVGGSMGGMLVLEWAFDKEFVRSIVPISTSLRHSAWCISWSEAQRQSIYSDPKFNDGYYGIDDQPVSGLGAARMSALLTYRSKCSFERRFARTVPDASRHPYPDRLPTPLTPSNAHWVVHNEGNRNRRERPCRSNGSSPTSESALNSPASSVSSLPSLGASQTTDSSSLNQSSLLRRPANTYFSAQSYLRYQAKKFVSRFDANCYISITKKLDTHDITRGRGSDSPKEVMKDLSLPVLVLGIESDGLFTFDEQVEIAKSFPNATLEKIISAEGHDGFLLEFTQVNSHIQKFQKEHLIDIMSQTNSFERLDSQVNDTNRESVFGEMEDITSW</sequence>
<dbReference type="EC" id="2.3.1.31" evidence="3"/>
<dbReference type="EMBL" id="AJ223985">
    <property type="protein sequence ID" value="CAA11759.1"/>
    <property type="molecule type" value="Genomic_DNA"/>
</dbReference>
<dbReference type="EMBL" id="CU329671">
    <property type="protein sequence ID" value="CAA18890.2"/>
    <property type="status" value="ALT_SEQ"/>
    <property type="molecule type" value="Genomic_DNA"/>
</dbReference>
<dbReference type="PIR" id="T43422">
    <property type="entry name" value="T43422"/>
</dbReference>
<dbReference type="RefSeq" id="NP_596706.2">
    <property type="nucleotide sequence ID" value="NM_001022631.2"/>
</dbReference>
<dbReference type="SMR" id="O60062"/>
<dbReference type="FunCoup" id="O60062">
    <property type="interactions" value="148"/>
</dbReference>
<dbReference type="STRING" id="284812.O60062"/>
<dbReference type="ESTHER" id="schpo-met2">
    <property type="family name" value="Homoserine_transacetylase"/>
</dbReference>
<dbReference type="iPTMnet" id="O60062"/>
<dbReference type="PaxDb" id="4896-SPBC56F2.11.1"/>
<dbReference type="GeneID" id="2540848"/>
<dbReference type="KEGG" id="spo:2540848"/>
<dbReference type="PomBase" id="SPBC56F2.11">
    <property type="gene designation" value="met6"/>
</dbReference>
<dbReference type="eggNOG" id="ENOG502QRIX">
    <property type="taxonomic scope" value="Eukaryota"/>
</dbReference>
<dbReference type="HOGENOM" id="CLU_028760_5_0_1"/>
<dbReference type="InParanoid" id="O60062"/>
<dbReference type="PhylomeDB" id="O60062"/>
<dbReference type="UniPathway" id="UPA00051">
    <property type="reaction ID" value="UER00074"/>
</dbReference>
<dbReference type="PRO" id="PR:O60062"/>
<dbReference type="Proteomes" id="UP000002485">
    <property type="component" value="Chromosome II"/>
</dbReference>
<dbReference type="GO" id="GO:0005829">
    <property type="term" value="C:cytosol"/>
    <property type="evidence" value="ECO:0007005"/>
    <property type="project" value="PomBase"/>
</dbReference>
<dbReference type="GO" id="GO:0004414">
    <property type="term" value="F:homoserine O-acetyltransferase activity"/>
    <property type="evidence" value="ECO:0000314"/>
    <property type="project" value="PomBase"/>
</dbReference>
<dbReference type="GO" id="GO:0071266">
    <property type="term" value="P:'de novo' L-methionine biosynthetic process"/>
    <property type="evidence" value="ECO:0000314"/>
    <property type="project" value="PomBase"/>
</dbReference>
<dbReference type="GO" id="GO:0071265">
    <property type="term" value="P:L-methionine biosynthetic process"/>
    <property type="evidence" value="ECO:0000315"/>
    <property type="project" value="PomBase"/>
</dbReference>
<dbReference type="GO" id="GO:0009086">
    <property type="term" value="P:methionine biosynthetic process"/>
    <property type="evidence" value="ECO:0000315"/>
    <property type="project" value="PomBase"/>
</dbReference>
<dbReference type="Gene3D" id="3.40.50.1820">
    <property type="entry name" value="alpha/beta hydrolase"/>
    <property type="match status" value="1"/>
</dbReference>
<dbReference type="HAMAP" id="MF_00296">
    <property type="entry name" value="MetX_acyltransf"/>
    <property type="match status" value="1"/>
</dbReference>
<dbReference type="InterPro" id="IPR000073">
    <property type="entry name" value="AB_hydrolase_1"/>
</dbReference>
<dbReference type="InterPro" id="IPR029058">
    <property type="entry name" value="AB_hydrolase_fold"/>
</dbReference>
<dbReference type="InterPro" id="IPR008220">
    <property type="entry name" value="HAT_MetX-like"/>
</dbReference>
<dbReference type="NCBIfam" id="TIGR01392">
    <property type="entry name" value="homoserO_Ac_trn"/>
    <property type="match status" value="1"/>
</dbReference>
<dbReference type="PANTHER" id="PTHR32268">
    <property type="entry name" value="HOMOSERINE O-ACETYLTRANSFERASE"/>
    <property type="match status" value="1"/>
</dbReference>
<dbReference type="PANTHER" id="PTHR32268:SF11">
    <property type="entry name" value="HOMOSERINE O-ACETYLTRANSFERASE"/>
    <property type="match status" value="1"/>
</dbReference>
<dbReference type="Pfam" id="PF00561">
    <property type="entry name" value="Abhydrolase_1"/>
    <property type="match status" value="1"/>
</dbReference>
<dbReference type="PIRSF" id="PIRSF000443">
    <property type="entry name" value="Homoser_Ac_trans"/>
    <property type="match status" value="1"/>
</dbReference>
<dbReference type="SUPFAM" id="SSF53474">
    <property type="entry name" value="alpha/beta-Hydrolases"/>
    <property type="match status" value="1"/>
</dbReference>
<feature type="chain" id="PRO_0000155756" description="Homoserine O-acetyltransferase">
    <location>
        <begin position="1"/>
        <end position="489"/>
    </location>
</feature>
<feature type="domain" description="AB hydrolase-1" evidence="1">
    <location>
        <begin position="69"/>
        <end position="438"/>
    </location>
</feature>
<feature type="region of interest" description="Disordered" evidence="2">
    <location>
        <begin position="255"/>
        <end position="329"/>
    </location>
</feature>
<feature type="compositionally biased region" description="Basic and acidic residues" evidence="2">
    <location>
        <begin position="280"/>
        <end position="290"/>
    </location>
</feature>
<feature type="compositionally biased region" description="Low complexity" evidence="2">
    <location>
        <begin position="299"/>
        <end position="329"/>
    </location>
</feature>
<feature type="active site" description="Nucleophile" evidence="6">
    <location>
        <position position="163"/>
    </location>
</feature>
<feature type="active site" evidence="6">
    <location>
        <position position="403"/>
    </location>
</feature>
<feature type="active site" evidence="6">
    <location>
        <position position="432"/>
    </location>
</feature>
<feature type="mutagenesis site" description="Loss of activity." evidence="3">
    <original>S</original>
    <variation>A</variation>
    <location>
        <position position="163"/>
    </location>
</feature>
<feature type="mutagenesis site" description="Loss of activity." evidence="3">
    <original>D</original>
    <variation>N</variation>
    <location>
        <position position="403"/>
    </location>
</feature>
<feature type="mutagenesis site" description="Loss of activity." evidence="3">
    <original>H</original>
    <variation>A</variation>
    <location>
        <position position="432"/>
    </location>
</feature>